<reference key="1">
    <citation type="journal article" date="2009" name="Genome Res.">
        <title>Comparative genomics of protoploid Saccharomycetaceae.</title>
        <authorList>
            <consortium name="The Genolevures Consortium"/>
            <person name="Souciet J.-L."/>
            <person name="Dujon B."/>
            <person name="Gaillardin C."/>
            <person name="Johnston M."/>
            <person name="Baret P.V."/>
            <person name="Cliften P."/>
            <person name="Sherman D.J."/>
            <person name="Weissenbach J."/>
            <person name="Westhof E."/>
            <person name="Wincker P."/>
            <person name="Jubin C."/>
            <person name="Poulain J."/>
            <person name="Barbe V."/>
            <person name="Segurens B."/>
            <person name="Artiguenave F."/>
            <person name="Anthouard V."/>
            <person name="Vacherie B."/>
            <person name="Val M.-E."/>
            <person name="Fulton R.S."/>
            <person name="Minx P."/>
            <person name="Wilson R."/>
            <person name="Durrens P."/>
            <person name="Jean G."/>
            <person name="Marck C."/>
            <person name="Martin T."/>
            <person name="Nikolski M."/>
            <person name="Rolland T."/>
            <person name="Seret M.-L."/>
            <person name="Casaregola S."/>
            <person name="Despons L."/>
            <person name="Fairhead C."/>
            <person name="Fischer G."/>
            <person name="Lafontaine I."/>
            <person name="Leh V."/>
            <person name="Lemaire M."/>
            <person name="de Montigny J."/>
            <person name="Neuveglise C."/>
            <person name="Thierry A."/>
            <person name="Blanc-Lenfle I."/>
            <person name="Bleykasten C."/>
            <person name="Diffels J."/>
            <person name="Fritsch E."/>
            <person name="Frangeul L."/>
            <person name="Goeffon A."/>
            <person name="Jauniaux N."/>
            <person name="Kachouri-Lafond R."/>
            <person name="Payen C."/>
            <person name="Potier S."/>
            <person name="Pribylova L."/>
            <person name="Ozanne C."/>
            <person name="Richard G.-F."/>
            <person name="Sacerdot C."/>
            <person name="Straub M.-L."/>
            <person name="Talla E."/>
        </authorList>
    </citation>
    <scope>NUCLEOTIDE SEQUENCE [LARGE SCALE GENOMIC DNA]</scope>
    <source>
        <strain>ATCC 2623 / CBS 732 / BCRC 21506 / NBRC 1130 / NCYC 568 / NRRL Y-229</strain>
    </source>
</reference>
<accession>C5DTH5</accession>
<evidence type="ECO:0000250" key="1">
    <source>
        <dbReference type="UniProtKB" id="P40045"/>
    </source>
</evidence>
<evidence type="ECO:0000305" key="2"/>
<keyword id="KW-0966">Cell projection</keyword>
<keyword id="KW-0963">Cytoplasm</keyword>
<keyword id="KW-1185">Reference proteome</keyword>
<protein>
    <recommendedName>
        <fullName>Topoisomerase I damage affected protein 2</fullName>
    </recommendedName>
</protein>
<organism>
    <name type="scientific">Zygosaccharomyces rouxii (strain ATCC 2623 / CBS 732 / NBRC 1130 / NCYC 568 / NRRL Y-229)</name>
    <dbReference type="NCBI Taxonomy" id="559307"/>
    <lineage>
        <taxon>Eukaryota</taxon>
        <taxon>Fungi</taxon>
        <taxon>Dikarya</taxon>
        <taxon>Ascomycota</taxon>
        <taxon>Saccharomycotina</taxon>
        <taxon>Saccharomycetes</taxon>
        <taxon>Saccharomycetales</taxon>
        <taxon>Saccharomycetaceae</taxon>
        <taxon>Zygosaccharomyces</taxon>
    </lineage>
</organism>
<gene>
    <name type="primary">TDA2</name>
    <name type="ordered locus">ZYRO0C08580g</name>
</gene>
<comment type="subcellular location">
    <subcellularLocation>
        <location evidence="1">Cytoplasm</location>
    </subcellularLocation>
    <subcellularLocation>
        <location evidence="1">Cell projection</location>
    </subcellularLocation>
    <text evidence="1">Concentrates at cytoplasmic punctate structures and localizes at the mating projection tip.</text>
</comment>
<comment type="similarity">
    <text evidence="2">Belongs to the TDA2 family.</text>
</comment>
<proteinExistence type="inferred from homology"/>
<feature type="chain" id="PRO_0000410744" description="Topoisomerase I damage affected protein 2">
    <location>
        <begin position="1"/>
        <end position="119"/>
    </location>
</feature>
<dbReference type="EMBL" id="CU928175">
    <property type="protein sequence ID" value="CAR27086.1"/>
    <property type="molecule type" value="Genomic_DNA"/>
</dbReference>
<dbReference type="RefSeq" id="XP_002496019.1">
    <property type="nucleotide sequence ID" value="XM_002495974.1"/>
</dbReference>
<dbReference type="SMR" id="C5DTH5"/>
<dbReference type="FunCoup" id="C5DTH5">
    <property type="interactions" value="38"/>
</dbReference>
<dbReference type="STRING" id="559307.C5DTH5"/>
<dbReference type="GeneID" id="8203229"/>
<dbReference type="KEGG" id="zro:ZYRO0C08580g"/>
<dbReference type="HOGENOM" id="CLU_137494_1_0_1"/>
<dbReference type="InParanoid" id="C5DTH5"/>
<dbReference type="Proteomes" id="UP000008536">
    <property type="component" value="Chromosome C"/>
</dbReference>
<dbReference type="GO" id="GO:0042995">
    <property type="term" value="C:cell projection"/>
    <property type="evidence" value="ECO:0007669"/>
    <property type="project" value="UniProtKB-SubCell"/>
</dbReference>
<dbReference type="GO" id="GO:0005737">
    <property type="term" value="C:cytoplasm"/>
    <property type="evidence" value="ECO:0007669"/>
    <property type="project" value="UniProtKB-SubCell"/>
</dbReference>
<dbReference type="CDD" id="cd21457">
    <property type="entry name" value="DLC-like_TDA2"/>
    <property type="match status" value="1"/>
</dbReference>
<dbReference type="Gene3D" id="3.30.1140.40">
    <property type="entry name" value="Tctex-1"/>
    <property type="match status" value="1"/>
</dbReference>
<dbReference type="InterPro" id="IPR038586">
    <property type="entry name" value="Tctex-1-like_sf"/>
</dbReference>
<sequence length="119" mass="13265">MNFETGQDKTSNAPIPKDKLSELIKSTYDNLERSGNASVDQLLKSLLEQLNSHSSLYKYIVSISTLETGSETIDSENCTMSNAIGASWNSRKDGLFNYDLPDNEHRGVKHLVTVIWVAK</sequence>
<name>TDA2_ZYGRC</name>